<sequence length="134" mass="14824">MATCRSRGVERGGAPHVLAVDDSSVDRAVISGILRSSQFRVTAVDSGKRALELLGSEPNVSMIITDYWMPEMTGYELLKKVKESSRLKEIPVVIMSSENVSTRINRCLEEGAEDFLLKPVQPSDVSRLCSRVLR</sequence>
<feature type="chain" id="PRO_0000433824" description="Two-component response regulator ORR5">
    <location>
        <begin position="1"/>
        <end position="134"/>
    </location>
</feature>
<feature type="domain" description="Response regulatory" evidence="2">
    <location>
        <begin position="16"/>
        <end position="133"/>
    </location>
</feature>
<feature type="modified residue" description="4-aspartylphosphate" evidence="2">
    <location>
        <position position="66"/>
    </location>
</feature>
<keyword id="KW-0932">Cytokinin signaling pathway</keyword>
<keyword id="KW-0963">Cytoplasm</keyword>
<keyword id="KW-0539">Nucleus</keyword>
<keyword id="KW-0597">Phosphoprotein</keyword>
<keyword id="KW-1185">Reference proteome</keyword>
<keyword id="KW-0804">Transcription</keyword>
<keyword id="KW-0805">Transcription regulation</keyword>
<keyword id="KW-0902">Two-component regulatory system</keyword>
<proteinExistence type="evidence at transcript level"/>
<name>ORR5_ORYSJ</name>
<protein>
    <recommendedName>
        <fullName evidence="10">Two-component response regulator ORR5</fullName>
    </recommendedName>
    <alternativeName>
        <fullName evidence="8">OsRR5</fullName>
    </alternativeName>
    <alternativeName>
        <fullName evidence="7">OsRRA4</fullName>
    </alternativeName>
</protein>
<dbReference type="EMBL" id="BR000314">
    <property type="protein sequence ID" value="FAA00266.1"/>
    <property type="molecule type" value="Genomic_DNA"/>
</dbReference>
<dbReference type="EMBL" id="AB249654">
    <property type="protein sequence ID" value="BAE79348.1"/>
    <property type="molecule type" value="mRNA"/>
</dbReference>
<dbReference type="EMBL" id="AL663010">
    <property type="protein sequence ID" value="CAE05717.2"/>
    <property type="status" value="ALT_SEQ"/>
    <property type="molecule type" value="Genomic_DNA"/>
</dbReference>
<dbReference type="EMBL" id="AP008210">
    <property type="protein sequence ID" value="BAF15262.1"/>
    <property type="molecule type" value="Genomic_DNA"/>
</dbReference>
<dbReference type="EMBL" id="AP014960">
    <property type="protein sequence ID" value="BAS90148.1"/>
    <property type="molecule type" value="Genomic_DNA"/>
</dbReference>
<dbReference type="EMBL" id="AK106426">
    <property type="protein sequence ID" value="BAG97714.1"/>
    <property type="molecule type" value="mRNA"/>
</dbReference>
<dbReference type="RefSeq" id="XP_015635282.1">
    <property type="nucleotide sequence ID" value="XM_015779796.1"/>
</dbReference>
<dbReference type="SMR" id="Q2HWH1"/>
<dbReference type="FunCoup" id="Q2HWH1">
    <property type="interactions" value="29"/>
</dbReference>
<dbReference type="STRING" id="39947.Q2HWH1"/>
<dbReference type="PaxDb" id="39947-Q2HWH1"/>
<dbReference type="EnsemblPlants" id="Os04t0524300-01">
    <property type="protein sequence ID" value="Os04t0524300-01"/>
    <property type="gene ID" value="Os04g0524300"/>
</dbReference>
<dbReference type="Gramene" id="Os04t0524300-01">
    <property type="protein sequence ID" value="Os04t0524300-01"/>
    <property type="gene ID" value="Os04g0524300"/>
</dbReference>
<dbReference type="KEGG" id="dosa:Os04g0524300"/>
<dbReference type="eggNOG" id="KOG1601">
    <property type="taxonomic scope" value="Eukaryota"/>
</dbReference>
<dbReference type="HOGENOM" id="CLU_000445_69_5_1"/>
<dbReference type="InParanoid" id="Q2HWH1"/>
<dbReference type="OMA" id="NIETIMI"/>
<dbReference type="OrthoDB" id="60033at2759"/>
<dbReference type="Proteomes" id="UP000000763">
    <property type="component" value="Chromosome 4"/>
</dbReference>
<dbReference type="Proteomes" id="UP000059680">
    <property type="component" value="Chromosome 4"/>
</dbReference>
<dbReference type="GO" id="GO:0005829">
    <property type="term" value="C:cytosol"/>
    <property type="evidence" value="ECO:0000314"/>
    <property type="project" value="UniProtKB"/>
</dbReference>
<dbReference type="GO" id="GO:0005634">
    <property type="term" value="C:nucleus"/>
    <property type="evidence" value="ECO:0000314"/>
    <property type="project" value="UniProtKB"/>
</dbReference>
<dbReference type="GO" id="GO:0009736">
    <property type="term" value="P:cytokinin-activated signaling pathway"/>
    <property type="evidence" value="ECO:0007669"/>
    <property type="project" value="UniProtKB-KW"/>
</dbReference>
<dbReference type="GO" id="GO:0000160">
    <property type="term" value="P:phosphorelay signal transduction system"/>
    <property type="evidence" value="ECO:0007669"/>
    <property type="project" value="UniProtKB-KW"/>
</dbReference>
<dbReference type="CDD" id="cd17581">
    <property type="entry name" value="REC_typeA_ARR"/>
    <property type="match status" value="1"/>
</dbReference>
<dbReference type="FunFam" id="3.40.50.2300:FF:000159">
    <property type="entry name" value="Two-component response regulator ORR5"/>
    <property type="match status" value="1"/>
</dbReference>
<dbReference type="Gene3D" id="3.40.50.2300">
    <property type="match status" value="1"/>
</dbReference>
<dbReference type="InterPro" id="IPR045279">
    <property type="entry name" value="ARR-like"/>
</dbReference>
<dbReference type="InterPro" id="IPR011006">
    <property type="entry name" value="CheY-like_superfamily"/>
</dbReference>
<dbReference type="InterPro" id="IPR001789">
    <property type="entry name" value="Sig_transdc_resp-reg_receiver"/>
</dbReference>
<dbReference type="PANTHER" id="PTHR43874">
    <property type="entry name" value="TWO-COMPONENT RESPONSE REGULATOR"/>
    <property type="match status" value="1"/>
</dbReference>
<dbReference type="PANTHER" id="PTHR43874:SF72">
    <property type="entry name" value="TWO-COMPONENT RESPONSE REGULATOR ORR5"/>
    <property type="match status" value="1"/>
</dbReference>
<dbReference type="Pfam" id="PF00072">
    <property type="entry name" value="Response_reg"/>
    <property type="match status" value="1"/>
</dbReference>
<dbReference type="SMART" id="SM00448">
    <property type="entry name" value="REC"/>
    <property type="match status" value="1"/>
</dbReference>
<dbReference type="SUPFAM" id="SSF52172">
    <property type="entry name" value="CheY-like"/>
    <property type="match status" value="1"/>
</dbReference>
<dbReference type="PROSITE" id="PS50110">
    <property type="entry name" value="RESPONSE_REGULATORY"/>
    <property type="match status" value="1"/>
</dbReference>
<reference key="1">
    <citation type="journal article" date="2006" name="Gene">
        <title>Identification and characterization of cytokinin-signalling gene families in rice.</title>
        <authorList>
            <person name="Ito Y."/>
            <person name="Kurata N."/>
        </authorList>
    </citation>
    <scope>NUCLEOTIDE SEQUENCE [GENOMIC DNA]</scope>
    <scope>TISSUE SPECIFICITY</scope>
    <source>
        <strain>cv. Nipponbare</strain>
    </source>
</reference>
<reference key="2">
    <citation type="journal article" date="2007" name="Plant Cell Physiol.">
        <title>Overexpression of a type-A response regulator alters rice morphology and cytokinin metabolism.</title>
        <authorList>
            <person name="Hirose N."/>
            <person name="Makita N."/>
            <person name="Kojima M."/>
            <person name="Kamada-Nobusada T."/>
            <person name="Sakakibara H."/>
        </authorList>
    </citation>
    <scope>NUCLEOTIDE SEQUENCE [MRNA]</scope>
    <source>
        <strain>cv. Nipponbare</strain>
    </source>
</reference>
<reference key="3">
    <citation type="journal article" date="2002" name="Nature">
        <title>Sequence and analysis of rice chromosome 4.</title>
        <authorList>
            <person name="Feng Q."/>
            <person name="Zhang Y."/>
            <person name="Hao P."/>
            <person name="Wang S."/>
            <person name="Fu G."/>
            <person name="Huang Y."/>
            <person name="Li Y."/>
            <person name="Zhu J."/>
            <person name="Liu Y."/>
            <person name="Hu X."/>
            <person name="Jia P."/>
            <person name="Zhang Y."/>
            <person name="Zhao Q."/>
            <person name="Ying K."/>
            <person name="Yu S."/>
            <person name="Tang Y."/>
            <person name="Weng Q."/>
            <person name="Zhang L."/>
            <person name="Lu Y."/>
            <person name="Mu J."/>
            <person name="Lu Y."/>
            <person name="Zhang L.S."/>
            <person name="Yu Z."/>
            <person name="Fan D."/>
            <person name="Liu X."/>
            <person name="Lu T."/>
            <person name="Li C."/>
            <person name="Wu Y."/>
            <person name="Sun T."/>
            <person name="Lei H."/>
            <person name="Li T."/>
            <person name="Hu H."/>
            <person name="Guan J."/>
            <person name="Wu M."/>
            <person name="Zhang R."/>
            <person name="Zhou B."/>
            <person name="Chen Z."/>
            <person name="Chen L."/>
            <person name="Jin Z."/>
            <person name="Wang R."/>
            <person name="Yin H."/>
            <person name="Cai Z."/>
            <person name="Ren S."/>
            <person name="Lv G."/>
            <person name="Gu W."/>
            <person name="Zhu G."/>
            <person name="Tu Y."/>
            <person name="Jia J."/>
            <person name="Zhang Y."/>
            <person name="Chen J."/>
            <person name="Kang H."/>
            <person name="Chen X."/>
            <person name="Shao C."/>
            <person name="Sun Y."/>
            <person name="Hu Q."/>
            <person name="Zhang X."/>
            <person name="Zhang W."/>
            <person name="Wang L."/>
            <person name="Ding C."/>
            <person name="Sheng H."/>
            <person name="Gu J."/>
            <person name="Chen S."/>
            <person name="Ni L."/>
            <person name="Zhu F."/>
            <person name="Chen W."/>
            <person name="Lan L."/>
            <person name="Lai Y."/>
            <person name="Cheng Z."/>
            <person name="Gu M."/>
            <person name="Jiang J."/>
            <person name="Li J."/>
            <person name="Hong G."/>
            <person name="Xue Y."/>
            <person name="Han B."/>
        </authorList>
    </citation>
    <scope>NUCLEOTIDE SEQUENCE [LARGE SCALE GENOMIC DNA]</scope>
    <source>
        <strain>cv. Nipponbare</strain>
    </source>
</reference>
<reference key="4">
    <citation type="journal article" date="2005" name="Nature">
        <title>The map-based sequence of the rice genome.</title>
        <authorList>
            <consortium name="International rice genome sequencing project (IRGSP)"/>
        </authorList>
    </citation>
    <scope>NUCLEOTIDE SEQUENCE [LARGE SCALE GENOMIC DNA]</scope>
    <source>
        <strain>cv. Nipponbare</strain>
    </source>
</reference>
<reference key="5">
    <citation type="journal article" date="2008" name="Nucleic Acids Res.">
        <title>The rice annotation project database (RAP-DB): 2008 update.</title>
        <authorList>
            <consortium name="The rice annotation project (RAP)"/>
        </authorList>
    </citation>
    <scope>GENOME REANNOTATION</scope>
    <source>
        <strain>cv. Nipponbare</strain>
    </source>
</reference>
<reference key="6">
    <citation type="journal article" date="2013" name="Rice">
        <title>Improvement of the Oryza sativa Nipponbare reference genome using next generation sequence and optical map data.</title>
        <authorList>
            <person name="Kawahara Y."/>
            <person name="de la Bastide M."/>
            <person name="Hamilton J.P."/>
            <person name="Kanamori H."/>
            <person name="McCombie W.R."/>
            <person name="Ouyang S."/>
            <person name="Schwartz D.C."/>
            <person name="Tanaka T."/>
            <person name="Wu J."/>
            <person name="Zhou S."/>
            <person name="Childs K.L."/>
            <person name="Davidson R.M."/>
            <person name="Lin H."/>
            <person name="Quesada-Ocampo L."/>
            <person name="Vaillancourt B."/>
            <person name="Sakai H."/>
            <person name="Lee S.S."/>
            <person name="Kim J."/>
            <person name="Numa H."/>
            <person name="Itoh T."/>
            <person name="Buell C.R."/>
            <person name="Matsumoto T."/>
        </authorList>
    </citation>
    <scope>GENOME REANNOTATION</scope>
    <source>
        <strain>cv. Nipponbare</strain>
    </source>
</reference>
<reference key="7">
    <citation type="journal article" date="2003" name="Science">
        <title>Collection, mapping, and annotation of over 28,000 cDNA clones from japonica rice.</title>
        <authorList>
            <consortium name="The rice full-length cDNA consortium"/>
        </authorList>
    </citation>
    <scope>NUCLEOTIDE SEQUENCE [LARGE SCALE MRNA]</scope>
    <source>
        <strain>cv. Nipponbare</strain>
    </source>
</reference>
<reference key="8">
    <citation type="journal article" date="2006" name="Plant Physiol.">
        <title>Whole-genome analysis of Oryza sativa reveals similar architecture of two-component signaling machinery with Arabidopsis.</title>
        <authorList>
            <person name="Pareek A."/>
            <person name="Singh A."/>
            <person name="Kumar M."/>
            <person name="Kushwaha H.R."/>
            <person name="Lynn A.M."/>
            <person name="Singla-Pareek S.L."/>
        </authorList>
    </citation>
    <scope>DISRUPTION PHENOTYPE</scope>
</reference>
<reference key="9">
    <citation type="journal article" date="2007" name="Genomics">
        <title>The two-component signal system in rice (Oryza sativa L.): a genome-wide study of cytokinin signal perception and transduction.</title>
        <authorList>
            <person name="Du L."/>
            <person name="Jiao F."/>
            <person name="Chu J."/>
            <person name="Jin G."/>
            <person name="Chen M."/>
            <person name="Wu P."/>
        </authorList>
    </citation>
    <scope>INDUCTION BY CYTOKININ</scope>
</reference>
<reference key="10">
    <citation type="journal article" date="2007" name="Plant Physiol.">
        <title>Nomenclature for two-component signaling elements of rice.</title>
        <authorList>
            <person name="Schaller G.E."/>
            <person name="Doi K."/>
            <person name="Hwang I."/>
            <person name="Kieber J.J."/>
            <person name="Khurana J.P."/>
            <person name="Kurata N."/>
            <person name="Mizuno T."/>
            <person name="Pareek A."/>
            <person name="Shiu S.H."/>
            <person name="Wu P."/>
            <person name="Yip W.K."/>
        </authorList>
    </citation>
    <scope>GENE FAMILY</scope>
    <scope>NOMENCLATURE</scope>
</reference>
<reference key="11">
    <citation type="journal article" date="2012" name="Plant Physiol.">
        <title>Characterization of genes involved in cytokinin signaling and metabolism from rice.</title>
        <authorList>
            <person name="Tsai Y.C."/>
            <person name="Weir N.R."/>
            <person name="Hill K."/>
            <person name="Zhang W."/>
            <person name="Kim H.J."/>
            <person name="Shiu S.H."/>
            <person name="Schaller G.E."/>
            <person name="Kieber J.J."/>
        </authorList>
    </citation>
    <scope>SUBCELLULAR LOCATION</scope>
</reference>
<comment type="function">
    <text evidence="1">Functions as a response regulator involved in His-to-Asp phosphorelay signal transduction system. Phosphorylation of the Asp residue in the receiver domain activates the ability of the protein to promote the transcription of target genes. Type-A response regulators seem to act as negative regulators of the cytokinin signaling.</text>
</comment>
<comment type="subcellular location">
    <subcellularLocation>
        <location evidence="6">Cytoplasm</location>
        <location evidence="6">Cytosol</location>
    </subcellularLocation>
    <subcellularLocation>
        <location evidence="6">Nucleus</location>
    </subcellularLocation>
</comment>
<comment type="tissue specificity">
    <text evidence="4">Weakly expressed in flowers and panicles.</text>
</comment>
<comment type="induction">
    <text evidence="5">By cytokinin in roots and leaves.</text>
</comment>
<comment type="PTM">
    <text evidence="10">Two-component system major event consists of a His-to-Asp phosphorelay between a sensor histidine kinase (HK) and a response regulator (RR). In plants, the His-to-Asp phosphorelay involves an additional intermediate named Histidine-containing phosphotransfer protein (HPt). This multistep phosphorelay consists of a His-Asp-His-Asp sequential transfer of a phosphate group between first a His and an Asp of the HK protein, followed by the transfer to a conserved His of the HPt protein and finally the transfer to an Asp in the receiver domain of the RR protein.</text>
</comment>
<comment type="disruption phenotype">
    <text evidence="3">Dwarf, narrow leaf, low tillering and altered kernal color phenotypes.</text>
</comment>
<comment type="similarity">
    <text evidence="10">Belongs to the ARR family. Type-A subfamily.</text>
</comment>
<comment type="sequence caution" evidence="10">
    <conflict type="erroneous gene model prediction">
        <sequence resource="EMBL-CDS" id="CAE05717"/>
    </conflict>
</comment>
<organism>
    <name type="scientific">Oryza sativa subsp. japonica</name>
    <name type="common">Rice</name>
    <dbReference type="NCBI Taxonomy" id="39947"/>
    <lineage>
        <taxon>Eukaryota</taxon>
        <taxon>Viridiplantae</taxon>
        <taxon>Streptophyta</taxon>
        <taxon>Embryophyta</taxon>
        <taxon>Tracheophyta</taxon>
        <taxon>Spermatophyta</taxon>
        <taxon>Magnoliopsida</taxon>
        <taxon>Liliopsida</taxon>
        <taxon>Poales</taxon>
        <taxon>Poaceae</taxon>
        <taxon>BOP clade</taxon>
        <taxon>Oryzoideae</taxon>
        <taxon>Oryzeae</taxon>
        <taxon>Oryzinae</taxon>
        <taxon>Oryza</taxon>
        <taxon>Oryza sativa</taxon>
    </lineage>
</organism>
<accession>Q2HWH1</accession>
<accession>A0A0P0WCT5</accession>
<accession>Q7XKF6</accession>
<gene>
    <name evidence="9" type="primary">RR5</name>
    <name evidence="11" type="ordered locus">Os04g0524300</name>
    <name evidence="10" type="ordered locus">LOC_Os04g44280</name>
    <name evidence="12" type="ORF">OSJNBb0065J09.13</name>
</gene>
<evidence type="ECO:0000250" key="1">
    <source>
        <dbReference type="UniProtKB" id="Q9ZWS9"/>
    </source>
</evidence>
<evidence type="ECO:0000255" key="2">
    <source>
        <dbReference type="PROSITE-ProRule" id="PRU00169"/>
    </source>
</evidence>
<evidence type="ECO:0000269" key="3">
    <source>
    </source>
</evidence>
<evidence type="ECO:0000269" key="4">
    <source>
    </source>
</evidence>
<evidence type="ECO:0000269" key="5">
    <source>
    </source>
</evidence>
<evidence type="ECO:0000269" key="6">
    <source>
    </source>
</evidence>
<evidence type="ECO:0000303" key="7">
    <source>
    </source>
</evidence>
<evidence type="ECO:0000303" key="8">
    <source>
    </source>
</evidence>
<evidence type="ECO:0000303" key="9">
    <source>
    </source>
</evidence>
<evidence type="ECO:0000305" key="10"/>
<evidence type="ECO:0000312" key="11">
    <source>
        <dbReference type="EMBL" id="BAF15262.1"/>
    </source>
</evidence>
<evidence type="ECO:0000312" key="12">
    <source>
        <dbReference type="EMBL" id="CAE05717.2"/>
    </source>
</evidence>